<proteinExistence type="evidence at transcript level"/>
<evidence type="ECO:0000250" key="1"/>
<evidence type="ECO:0000255" key="2"/>
<evidence type="ECO:0000305" key="3"/>
<dbReference type="EMBL" id="AY261361">
    <property type="status" value="NOT_ANNOTATED_CDS"/>
    <property type="molecule type" value="Genomic_DNA"/>
</dbReference>
<dbReference type="Proteomes" id="UP000000860">
    <property type="component" value="Segment"/>
</dbReference>
<dbReference type="GO" id="GO:0020002">
    <property type="term" value="C:host cell plasma membrane"/>
    <property type="evidence" value="ECO:0007669"/>
    <property type="project" value="UniProtKB-SubCell"/>
</dbReference>
<dbReference type="GO" id="GO:0016020">
    <property type="term" value="C:membrane"/>
    <property type="evidence" value="ECO:0007669"/>
    <property type="project" value="UniProtKB-KW"/>
</dbReference>
<dbReference type="GO" id="GO:0055036">
    <property type="term" value="C:virion membrane"/>
    <property type="evidence" value="ECO:0007669"/>
    <property type="project" value="UniProtKB-SubCell"/>
</dbReference>
<dbReference type="Gene3D" id="3.50.4.10">
    <property type="entry name" value="Hepatocyte Growth Factor"/>
    <property type="match status" value="1"/>
</dbReference>
<sequence>MYYPAVQVLIGIILVDNFNTEFLSSEKKNCKTDTDCKDKGHHCVRGTCTDISCLEAVKQDIKDINLDPSIRSCNYTPDFYTFNSTTADLQSPFGKTRIDYGSIYTSDWSSIDHCQSLCCKHNDCIGWEFDKIESSHGGECYFYTNPHPALKNSNDTTIMGIARNIL</sequence>
<organism>
    <name type="scientific">African swine fever virus (isolate Tick/Malawi/Lil 20-1/1983)</name>
    <name type="common">ASFV</name>
    <dbReference type="NCBI Taxonomy" id="10500"/>
    <lineage>
        <taxon>Viruses</taxon>
        <taxon>Varidnaviria</taxon>
        <taxon>Bamfordvirae</taxon>
        <taxon>Nucleocytoviricota</taxon>
        <taxon>Pokkesviricetes</taxon>
        <taxon>Asfuvirales</taxon>
        <taxon>Asfarviridae</taxon>
        <taxon>Asfivirus</taxon>
        <taxon>African swine fever virus</taxon>
    </lineage>
</organism>
<organismHost>
    <name type="scientific">Ornithodoros</name>
    <name type="common">relapsing fever ticks</name>
    <dbReference type="NCBI Taxonomy" id="6937"/>
</organismHost>
<organismHost>
    <name type="scientific">Phacochoerus aethiopicus</name>
    <name type="common">Warthog</name>
    <dbReference type="NCBI Taxonomy" id="85517"/>
</organismHost>
<organismHost>
    <name type="scientific">Phacochoerus africanus</name>
    <name type="common">Warthog</name>
    <dbReference type="NCBI Taxonomy" id="41426"/>
</organismHost>
<organismHost>
    <name type="scientific">Potamochoerus larvatus</name>
    <name type="common">Bushpig</name>
    <dbReference type="NCBI Taxonomy" id="273792"/>
</organismHost>
<organismHost>
    <name type="scientific">Sus scrofa</name>
    <name type="common">Pig</name>
    <dbReference type="NCBI Taxonomy" id="9823"/>
</organismHost>
<keyword id="KW-0244">Early protein</keyword>
<keyword id="KW-1032">Host cell membrane</keyword>
<keyword id="KW-1043">Host membrane</keyword>
<keyword id="KW-0472">Membrane</keyword>
<keyword id="KW-0812">Transmembrane</keyword>
<keyword id="KW-1133">Transmembrane helix</keyword>
<keyword id="KW-0946">Virion</keyword>
<protein>
    <recommendedName>
        <fullName evidence="3">Putative membrane protein 162</fullName>
    </recommendedName>
</protein>
<accession>P0C9W4</accession>
<name>EV162_ASFM2</name>
<gene>
    <name type="ordered locus">Mal-162</name>
</gene>
<reference key="1">
    <citation type="submission" date="2003-03" db="EMBL/GenBank/DDBJ databases">
        <title>African swine fever virus genomes.</title>
        <authorList>
            <person name="Kutish G.F."/>
            <person name="Rock D.L."/>
        </authorList>
    </citation>
    <scope>NUCLEOTIDE SEQUENCE [LARGE SCALE GENOMIC DNA]</scope>
</reference>
<feature type="chain" id="PRO_0000373368" description="Putative membrane protein 162">
    <location>
        <begin position="1"/>
        <end position="166"/>
    </location>
</feature>
<feature type="topological domain" description="Intravirion" evidence="2">
    <location>
        <position position="1"/>
    </location>
</feature>
<feature type="transmembrane region" description="Helical" evidence="2">
    <location>
        <begin position="2"/>
        <end position="22"/>
    </location>
</feature>
<feature type="topological domain" description="Virion surface" evidence="2">
    <location>
        <begin position="23"/>
        <end position="166"/>
    </location>
</feature>
<comment type="subcellular location">
    <subcellularLocation>
        <location>Virion membrane</location>
        <topology>Single-pass membrane protein</topology>
    </subcellularLocation>
    <subcellularLocation>
        <location evidence="1">Host cell membrane</location>
        <topology evidence="1">Single-pass membrane protein</topology>
    </subcellularLocation>
</comment>
<comment type="induction">
    <text>Early structural protein.</text>
</comment>
<comment type="similarity">
    <text evidence="3">Belongs to the asfivirus envelope protein p22 family.</text>
</comment>